<feature type="chain" id="PRO_1000049756" description="Large ribosomal subunit protein bL19">
    <location>
        <begin position="1"/>
        <end position="115"/>
    </location>
</feature>
<keyword id="KW-0687">Ribonucleoprotein</keyword>
<keyword id="KW-0689">Ribosomal protein</keyword>
<comment type="function">
    <text evidence="1">This protein is located at the 30S-50S ribosomal subunit interface and may play a role in the structure and function of the aminoacyl-tRNA binding site.</text>
</comment>
<comment type="similarity">
    <text evidence="1">Belongs to the bacterial ribosomal protein bL19 family.</text>
</comment>
<sequence length="115" mass="13146">MNPLIQSLTEGQLRTDIPSFRPGDTVRVHAKVVEGTRERIQIFEGVVISRKGQGISEMYTVRKISSGIGVERTFPIHTPRVDKIEVVRYGKVRRAKLYYLRALQGKAARIKEIRK</sequence>
<accession>Q03KD6</accession>
<organism>
    <name type="scientific">Streptococcus thermophilus (strain ATCC BAA-491 / LMD-9)</name>
    <dbReference type="NCBI Taxonomy" id="322159"/>
    <lineage>
        <taxon>Bacteria</taxon>
        <taxon>Bacillati</taxon>
        <taxon>Bacillota</taxon>
        <taxon>Bacilli</taxon>
        <taxon>Lactobacillales</taxon>
        <taxon>Streptococcaceae</taxon>
        <taxon>Streptococcus</taxon>
    </lineage>
</organism>
<gene>
    <name evidence="1" type="primary">rplS</name>
    <name type="ordered locus">STER_1144</name>
</gene>
<name>RL19_STRTD</name>
<evidence type="ECO:0000255" key="1">
    <source>
        <dbReference type="HAMAP-Rule" id="MF_00402"/>
    </source>
</evidence>
<evidence type="ECO:0000305" key="2"/>
<reference key="1">
    <citation type="journal article" date="2006" name="Proc. Natl. Acad. Sci. U.S.A.">
        <title>Comparative genomics of the lactic acid bacteria.</title>
        <authorList>
            <person name="Makarova K.S."/>
            <person name="Slesarev A."/>
            <person name="Wolf Y.I."/>
            <person name="Sorokin A."/>
            <person name="Mirkin B."/>
            <person name="Koonin E.V."/>
            <person name="Pavlov A."/>
            <person name="Pavlova N."/>
            <person name="Karamychev V."/>
            <person name="Polouchine N."/>
            <person name="Shakhova V."/>
            <person name="Grigoriev I."/>
            <person name="Lou Y."/>
            <person name="Rohksar D."/>
            <person name="Lucas S."/>
            <person name="Huang K."/>
            <person name="Goodstein D.M."/>
            <person name="Hawkins T."/>
            <person name="Plengvidhya V."/>
            <person name="Welker D."/>
            <person name="Hughes J."/>
            <person name="Goh Y."/>
            <person name="Benson A."/>
            <person name="Baldwin K."/>
            <person name="Lee J.-H."/>
            <person name="Diaz-Muniz I."/>
            <person name="Dosti B."/>
            <person name="Smeianov V."/>
            <person name="Wechter W."/>
            <person name="Barabote R."/>
            <person name="Lorca G."/>
            <person name="Altermann E."/>
            <person name="Barrangou R."/>
            <person name="Ganesan B."/>
            <person name="Xie Y."/>
            <person name="Rawsthorne H."/>
            <person name="Tamir D."/>
            <person name="Parker C."/>
            <person name="Breidt F."/>
            <person name="Broadbent J.R."/>
            <person name="Hutkins R."/>
            <person name="O'Sullivan D."/>
            <person name="Steele J."/>
            <person name="Unlu G."/>
            <person name="Saier M.H. Jr."/>
            <person name="Klaenhammer T."/>
            <person name="Richardson P."/>
            <person name="Kozyavkin S."/>
            <person name="Weimer B.C."/>
            <person name="Mills D.A."/>
        </authorList>
    </citation>
    <scope>NUCLEOTIDE SEQUENCE [LARGE SCALE GENOMIC DNA]</scope>
    <source>
        <strain>ATCC BAA-491 / LMD-9</strain>
    </source>
</reference>
<proteinExistence type="inferred from homology"/>
<dbReference type="EMBL" id="CP000419">
    <property type="protein sequence ID" value="ABJ66336.1"/>
    <property type="molecule type" value="Genomic_DNA"/>
</dbReference>
<dbReference type="RefSeq" id="WP_002950935.1">
    <property type="nucleotide sequence ID" value="NZ_CP086001.1"/>
</dbReference>
<dbReference type="SMR" id="Q03KD6"/>
<dbReference type="GeneID" id="66898973"/>
<dbReference type="KEGG" id="ste:STER_1144"/>
<dbReference type="HOGENOM" id="CLU_103507_2_1_9"/>
<dbReference type="GO" id="GO:0022625">
    <property type="term" value="C:cytosolic large ribosomal subunit"/>
    <property type="evidence" value="ECO:0007669"/>
    <property type="project" value="TreeGrafter"/>
</dbReference>
<dbReference type="GO" id="GO:0003735">
    <property type="term" value="F:structural constituent of ribosome"/>
    <property type="evidence" value="ECO:0007669"/>
    <property type="project" value="InterPro"/>
</dbReference>
<dbReference type="GO" id="GO:0006412">
    <property type="term" value="P:translation"/>
    <property type="evidence" value="ECO:0007669"/>
    <property type="project" value="UniProtKB-UniRule"/>
</dbReference>
<dbReference type="FunFam" id="2.30.30.790:FF:000001">
    <property type="entry name" value="50S ribosomal protein L19"/>
    <property type="match status" value="1"/>
</dbReference>
<dbReference type="Gene3D" id="2.30.30.790">
    <property type="match status" value="1"/>
</dbReference>
<dbReference type="HAMAP" id="MF_00402">
    <property type="entry name" value="Ribosomal_bL19"/>
    <property type="match status" value="1"/>
</dbReference>
<dbReference type="InterPro" id="IPR001857">
    <property type="entry name" value="Ribosomal_bL19"/>
</dbReference>
<dbReference type="InterPro" id="IPR018257">
    <property type="entry name" value="Ribosomal_bL19_CS"/>
</dbReference>
<dbReference type="InterPro" id="IPR038657">
    <property type="entry name" value="Ribosomal_bL19_sf"/>
</dbReference>
<dbReference type="InterPro" id="IPR008991">
    <property type="entry name" value="Translation_prot_SH3-like_sf"/>
</dbReference>
<dbReference type="NCBIfam" id="TIGR01024">
    <property type="entry name" value="rplS_bact"/>
    <property type="match status" value="1"/>
</dbReference>
<dbReference type="PANTHER" id="PTHR15680:SF9">
    <property type="entry name" value="LARGE RIBOSOMAL SUBUNIT PROTEIN BL19M"/>
    <property type="match status" value="1"/>
</dbReference>
<dbReference type="PANTHER" id="PTHR15680">
    <property type="entry name" value="RIBOSOMAL PROTEIN L19"/>
    <property type="match status" value="1"/>
</dbReference>
<dbReference type="Pfam" id="PF01245">
    <property type="entry name" value="Ribosomal_L19"/>
    <property type="match status" value="1"/>
</dbReference>
<dbReference type="PIRSF" id="PIRSF002191">
    <property type="entry name" value="Ribosomal_L19"/>
    <property type="match status" value="1"/>
</dbReference>
<dbReference type="PRINTS" id="PR00061">
    <property type="entry name" value="RIBOSOMALL19"/>
</dbReference>
<dbReference type="SUPFAM" id="SSF50104">
    <property type="entry name" value="Translation proteins SH3-like domain"/>
    <property type="match status" value="1"/>
</dbReference>
<dbReference type="PROSITE" id="PS01015">
    <property type="entry name" value="RIBOSOMAL_L19"/>
    <property type="match status" value="1"/>
</dbReference>
<protein>
    <recommendedName>
        <fullName evidence="1">Large ribosomal subunit protein bL19</fullName>
    </recommendedName>
    <alternativeName>
        <fullName evidence="2">50S ribosomal protein L19</fullName>
    </alternativeName>
</protein>